<organism>
    <name type="scientific">Anaeromyxobacter dehalogenans (strain 2CP-C)</name>
    <dbReference type="NCBI Taxonomy" id="290397"/>
    <lineage>
        <taxon>Bacteria</taxon>
        <taxon>Pseudomonadati</taxon>
        <taxon>Myxococcota</taxon>
        <taxon>Myxococcia</taxon>
        <taxon>Myxococcales</taxon>
        <taxon>Cystobacterineae</taxon>
        <taxon>Anaeromyxobacteraceae</taxon>
        <taxon>Anaeromyxobacter</taxon>
    </lineage>
</organism>
<reference key="1">
    <citation type="submission" date="2006-01" db="EMBL/GenBank/DDBJ databases">
        <title>Complete sequence of Anaeromyxobacter dehalogenans 2CP-C.</title>
        <authorList>
            <person name="Copeland A."/>
            <person name="Lucas S."/>
            <person name="Lapidus A."/>
            <person name="Barry K."/>
            <person name="Detter J.C."/>
            <person name="Glavina T."/>
            <person name="Hammon N."/>
            <person name="Israni S."/>
            <person name="Pitluck S."/>
            <person name="Brettin T."/>
            <person name="Bruce D."/>
            <person name="Han C."/>
            <person name="Tapia R."/>
            <person name="Gilna P."/>
            <person name="Kiss H."/>
            <person name="Schmutz J."/>
            <person name="Larimer F."/>
            <person name="Land M."/>
            <person name="Kyrpides N."/>
            <person name="Anderson I."/>
            <person name="Sanford R.A."/>
            <person name="Ritalahti K.M."/>
            <person name="Thomas H.S."/>
            <person name="Kirby J.R."/>
            <person name="Zhulin I.B."/>
            <person name="Loeffler F.E."/>
            <person name="Richardson P."/>
        </authorList>
    </citation>
    <scope>NUCLEOTIDE SEQUENCE [LARGE SCALE GENOMIC DNA]</scope>
    <source>
        <strain>2CP-C</strain>
    </source>
</reference>
<feature type="chain" id="PRO_1000098777" description="Sulfur carrier protein FdhD">
    <location>
        <begin position="1"/>
        <end position="288"/>
    </location>
</feature>
<feature type="active site" description="Cysteine persulfide intermediate" evidence="1">
    <location>
        <position position="122"/>
    </location>
</feature>
<feature type="binding site" evidence="1">
    <location>
        <begin position="268"/>
        <end position="273"/>
    </location>
    <ligand>
        <name>Mo-bis(molybdopterin guanine dinucleotide)</name>
        <dbReference type="ChEBI" id="CHEBI:60539"/>
    </ligand>
</feature>
<dbReference type="EMBL" id="CP000251">
    <property type="protein sequence ID" value="ABC80601.1"/>
    <property type="molecule type" value="Genomic_DNA"/>
</dbReference>
<dbReference type="RefSeq" id="WP_011419884.1">
    <property type="nucleotide sequence ID" value="NC_007760.1"/>
</dbReference>
<dbReference type="SMR" id="Q2IP67"/>
<dbReference type="STRING" id="290397.Adeh_0826"/>
<dbReference type="KEGG" id="ade:Adeh_0826"/>
<dbReference type="eggNOG" id="COG1526">
    <property type="taxonomic scope" value="Bacteria"/>
</dbReference>
<dbReference type="HOGENOM" id="CLU_056887_3_0_7"/>
<dbReference type="OrthoDB" id="3197277at2"/>
<dbReference type="Proteomes" id="UP000001935">
    <property type="component" value="Chromosome"/>
</dbReference>
<dbReference type="GO" id="GO:0005737">
    <property type="term" value="C:cytoplasm"/>
    <property type="evidence" value="ECO:0007669"/>
    <property type="project" value="UniProtKB-SubCell"/>
</dbReference>
<dbReference type="GO" id="GO:0097163">
    <property type="term" value="F:sulfur carrier activity"/>
    <property type="evidence" value="ECO:0007669"/>
    <property type="project" value="UniProtKB-UniRule"/>
</dbReference>
<dbReference type="GO" id="GO:0016783">
    <property type="term" value="F:sulfurtransferase activity"/>
    <property type="evidence" value="ECO:0007669"/>
    <property type="project" value="InterPro"/>
</dbReference>
<dbReference type="GO" id="GO:0006777">
    <property type="term" value="P:Mo-molybdopterin cofactor biosynthetic process"/>
    <property type="evidence" value="ECO:0007669"/>
    <property type="project" value="UniProtKB-UniRule"/>
</dbReference>
<dbReference type="Gene3D" id="3.10.20.10">
    <property type="match status" value="1"/>
</dbReference>
<dbReference type="Gene3D" id="3.40.140.10">
    <property type="entry name" value="Cytidine Deaminase, domain 2"/>
    <property type="match status" value="1"/>
</dbReference>
<dbReference type="HAMAP" id="MF_00187">
    <property type="entry name" value="FdhD"/>
    <property type="match status" value="1"/>
</dbReference>
<dbReference type="InterPro" id="IPR016193">
    <property type="entry name" value="Cytidine_deaminase-like"/>
</dbReference>
<dbReference type="InterPro" id="IPR003786">
    <property type="entry name" value="FdhD"/>
</dbReference>
<dbReference type="NCBIfam" id="TIGR00129">
    <property type="entry name" value="fdhD_narQ"/>
    <property type="match status" value="1"/>
</dbReference>
<dbReference type="PANTHER" id="PTHR30592">
    <property type="entry name" value="FORMATE DEHYDROGENASE"/>
    <property type="match status" value="1"/>
</dbReference>
<dbReference type="PANTHER" id="PTHR30592:SF1">
    <property type="entry name" value="SULFUR CARRIER PROTEIN FDHD"/>
    <property type="match status" value="1"/>
</dbReference>
<dbReference type="Pfam" id="PF02634">
    <property type="entry name" value="FdhD-NarQ"/>
    <property type="match status" value="1"/>
</dbReference>
<dbReference type="PIRSF" id="PIRSF015626">
    <property type="entry name" value="FdhD"/>
    <property type="match status" value="1"/>
</dbReference>
<dbReference type="SUPFAM" id="SSF53927">
    <property type="entry name" value="Cytidine deaminase-like"/>
    <property type="match status" value="1"/>
</dbReference>
<evidence type="ECO:0000255" key="1">
    <source>
        <dbReference type="HAMAP-Rule" id="MF_00187"/>
    </source>
</evidence>
<sequence>METSLKRAAAPAGAVAERTVLRNGGAVRDALAVEEPLEIRVDGERLATTMRTPGADGDLALGFLFAEGIIAGVEDVGTVIHCGRPGEEGYGNVMDVRSAAGMRIDPERVLEGRRFIPVSAACGVCGRLSIDHLMERLRPLPAGEPVPTALVAAGMETLARSQPVFERTGGLHAAVLVGRDGAPVASAEDVGRHNAVDKVVGAALRAGRVGPRAAAASAPALLAVSGRAGFEIVQKAAAAGVPVVASVSAPSSLAVDLARAAGVTLCGFVRGERMNVYANGERLGLTGP</sequence>
<accession>Q2IP67</accession>
<gene>
    <name evidence="1" type="primary">fdhD</name>
    <name type="ordered locus">Adeh_0826</name>
</gene>
<name>FDHD_ANADE</name>
<comment type="function">
    <text evidence="1">Required for formate dehydrogenase (FDH) activity. Acts as a sulfur carrier protein that transfers sulfur from IscS to the molybdenum cofactor prior to its insertion into FDH.</text>
</comment>
<comment type="subcellular location">
    <subcellularLocation>
        <location evidence="1">Cytoplasm</location>
    </subcellularLocation>
</comment>
<comment type="similarity">
    <text evidence="1">Belongs to the FdhD family.</text>
</comment>
<proteinExistence type="inferred from homology"/>
<keyword id="KW-0963">Cytoplasm</keyword>
<keyword id="KW-0501">Molybdenum cofactor biosynthesis</keyword>
<keyword id="KW-1185">Reference proteome</keyword>
<protein>
    <recommendedName>
        <fullName evidence="1">Sulfur carrier protein FdhD</fullName>
    </recommendedName>
</protein>